<keyword id="KW-0997">Cell inner membrane</keyword>
<keyword id="KW-1003">Cell membrane</keyword>
<keyword id="KW-0472">Membrane</keyword>
<keyword id="KW-0812">Transmembrane</keyword>
<keyword id="KW-1133">Transmembrane helix</keyword>
<reference key="1">
    <citation type="journal article" date="2009" name="J. Bacteriol.">
        <title>Genomic sequencing reveals regulatory mutations and recombinational events in the widely used MC4100 lineage of Escherichia coli K-12.</title>
        <authorList>
            <person name="Ferenci T."/>
            <person name="Zhou Z."/>
            <person name="Betteridge T."/>
            <person name="Ren Y."/>
            <person name="Liu Y."/>
            <person name="Feng L."/>
            <person name="Reeves P.R."/>
            <person name="Wang L."/>
        </authorList>
    </citation>
    <scope>NUCLEOTIDE SEQUENCE [LARGE SCALE GENOMIC DNA]</scope>
    <source>
        <strain>K12 / MC4100 / BW2952</strain>
    </source>
</reference>
<evidence type="ECO:0000255" key="1">
    <source>
        <dbReference type="HAMAP-Rule" id="MF_01144"/>
    </source>
</evidence>
<gene>
    <name evidence="1" type="primary">yohJ</name>
    <name type="ordered locus">BWG_1923</name>
</gene>
<dbReference type="EMBL" id="CP001396">
    <property type="protein sequence ID" value="ACR62226.1"/>
    <property type="molecule type" value="Genomic_DNA"/>
</dbReference>
<dbReference type="RefSeq" id="WP_001295452.1">
    <property type="nucleotide sequence ID" value="NC_012759.1"/>
</dbReference>
<dbReference type="SMR" id="C4ZSM1"/>
<dbReference type="KEGG" id="ebw:BWG_1923"/>
<dbReference type="HOGENOM" id="CLU_113736_1_1_6"/>
<dbReference type="GO" id="GO:0005886">
    <property type="term" value="C:plasma membrane"/>
    <property type="evidence" value="ECO:0007669"/>
    <property type="project" value="UniProtKB-SubCell"/>
</dbReference>
<dbReference type="HAMAP" id="MF_01144">
    <property type="entry name" value="UPF0299"/>
    <property type="match status" value="1"/>
</dbReference>
<dbReference type="InterPro" id="IPR005538">
    <property type="entry name" value="LrgA/CidA"/>
</dbReference>
<dbReference type="InterPro" id="IPR022957">
    <property type="entry name" value="Uncharacterised_UPF0299"/>
</dbReference>
<dbReference type="NCBIfam" id="NF002494">
    <property type="entry name" value="PRK01821.1"/>
    <property type="match status" value="1"/>
</dbReference>
<dbReference type="PANTHER" id="PTHR33931">
    <property type="entry name" value="HOLIN-LIKE PROTEIN CIDA-RELATED"/>
    <property type="match status" value="1"/>
</dbReference>
<dbReference type="PANTHER" id="PTHR33931:SF5">
    <property type="entry name" value="UPF0299 MEMBRANE PROTEIN YOHJ"/>
    <property type="match status" value="1"/>
</dbReference>
<dbReference type="Pfam" id="PF03788">
    <property type="entry name" value="LrgA"/>
    <property type="match status" value="1"/>
</dbReference>
<organism>
    <name type="scientific">Escherichia coli (strain K12 / MC4100 / BW2952)</name>
    <dbReference type="NCBI Taxonomy" id="595496"/>
    <lineage>
        <taxon>Bacteria</taxon>
        <taxon>Pseudomonadati</taxon>
        <taxon>Pseudomonadota</taxon>
        <taxon>Gammaproteobacteria</taxon>
        <taxon>Enterobacterales</taxon>
        <taxon>Enterobacteriaceae</taxon>
        <taxon>Escherichia</taxon>
    </lineage>
</organism>
<comment type="subcellular location">
    <subcellularLocation>
        <location evidence="1">Cell inner membrane</location>
        <topology evidence="1">Multi-pass membrane protein</topology>
    </subcellularLocation>
</comment>
<comment type="similarity">
    <text evidence="1">Belongs to the UPF0299 family.</text>
</comment>
<accession>C4ZSM1</accession>
<proteinExistence type="inferred from homology"/>
<name>YOHJ_ECOBW</name>
<sequence>MSKTLNIIWQYLRAFVLIYACLYAGIFIASLLPVTIPGSIIGMLILFVLLALQILPAKWVNPGCYVLIRYMALLFVPIGVGVMQYFDLLRAQFGPVVVSCAVSTLVVFLVVSWSSQLVHGERKVVGQKGSEE</sequence>
<protein>
    <recommendedName>
        <fullName evidence="1">UPF0299 membrane protein YohJ</fullName>
    </recommendedName>
</protein>
<feature type="chain" id="PRO_1000213645" description="UPF0299 membrane protein YohJ">
    <location>
        <begin position="1"/>
        <end position="132"/>
    </location>
</feature>
<feature type="transmembrane region" description="Helical" evidence="1">
    <location>
        <begin position="7"/>
        <end position="27"/>
    </location>
</feature>
<feature type="transmembrane region" description="Helical" evidence="1">
    <location>
        <begin position="31"/>
        <end position="51"/>
    </location>
</feature>
<feature type="transmembrane region" description="Helical" evidence="1">
    <location>
        <begin position="63"/>
        <end position="83"/>
    </location>
</feature>
<feature type="transmembrane region" description="Helical" evidence="1">
    <location>
        <begin position="93"/>
        <end position="113"/>
    </location>
</feature>